<protein>
    <recommendedName>
        <fullName evidence="1">tRNA-2-methylthio-N(6)-dimethylallyladenosine synthase</fullName>
        <ecNumber evidence="1">2.8.4.3</ecNumber>
    </recommendedName>
    <alternativeName>
        <fullName evidence="1">(Dimethylallyl)adenosine tRNA methylthiotransferase MiaB</fullName>
    </alternativeName>
    <alternativeName>
        <fullName evidence="1">tRNA-i(6)A37 methylthiotransferase</fullName>
    </alternativeName>
</protein>
<gene>
    <name evidence="1" type="primary">miaB</name>
    <name type="ordered locus">NMCC_0355</name>
</gene>
<evidence type="ECO:0000255" key="1">
    <source>
        <dbReference type="HAMAP-Rule" id="MF_01864"/>
    </source>
</evidence>
<evidence type="ECO:0000255" key="2">
    <source>
        <dbReference type="PROSITE-ProRule" id="PRU01266"/>
    </source>
</evidence>
<feature type="chain" id="PRO_0000374404" description="tRNA-2-methylthio-N(6)-dimethylallyladenosine synthase">
    <location>
        <begin position="1"/>
        <end position="442"/>
    </location>
</feature>
<feature type="domain" description="MTTase N-terminal" evidence="1">
    <location>
        <begin position="2"/>
        <end position="120"/>
    </location>
</feature>
<feature type="domain" description="Radical SAM core" evidence="2">
    <location>
        <begin position="143"/>
        <end position="375"/>
    </location>
</feature>
<feature type="domain" description="TRAM" evidence="1">
    <location>
        <begin position="378"/>
        <end position="441"/>
    </location>
</feature>
<feature type="binding site" evidence="1">
    <location>
        <position position="11"/>
    </location>
    <ligand>
        <name>[4Fe-4S] cluster</name>
        <dbReference type="ChEBI" id="CHEBI:49883"/>
        <label>1</label>
    </ligand>
</feature>
<feature type="binding site" evidence="1">
    <location>
        <position position="49"/>
    </location>
    <ligand>
        <name>[4Fe-4S] cluster</name>
        <dbReference type="ChEBI" id="CHEBI:49883"/>
        <label>1</label>
    </ligand>
</feature>
<feature type="binding site" evidence="1">
    <location>
        <position position="83"/>
    </location>
    <ligand>
        <name>[4Fe-4S] cluster</name>
        <dbReference type="ChEBI" id="CHEBI:49883"/>
        <label>1</label>
    </ligand>
</feature>
<feature type="binding site" evidence="1">
    <location>
        <position position="157"/>
    </location>
    <ligand>
        <name>[4Fe-4S] cluster</name>
        <dbReference type="ChEBI" id="CHEBI:49883"/>
        <label>2</label>
        <note>4Fe-4S-S-AdoMet</note>
    </ligand>
</feature>
<feature type="binding site" evidence="1">
    <location>
        <position position="161"/>
    </location>
    <ligand>
        <name>[4Fe-4S] cluster</name>
        <dbReference type="ChEBI" id="CHEBI:49883"/>
        <label>2</label>
        <note>4Fe-4S-S-AdoMet</note>
    </ligand>
</feature>
<feature type="binding site" evidence="1">
    <location>
        <position position="164"/>
    </location>
    <ligand>
        <name>[4Fe-4S] cluster</name>
        <dbReference type="ChEBI" id="CHEBI:49883"/>
        <label>2</label>
        <note>4Fe-4S-S-AdoMet</note>
    </ligand>
</feature>
<name>MIAB_NEIM0</name>
<dbReference type="EC" id="2.8.4.3" evidence="1"/>
<dbReference type="EMBL" id="CP000381">
    <property type="protein sequence ID" value="ABX72562.1"/>
    <property type="molecule type" value="Genomic_DNA"/>
</dbReference>
<dbReference type="RefSeq" id="WP_012221272.1">
    <property type="nucleotide sequence ID" value="NC_010120.1"/>
</dbReference>
<dbReference type="SMR" id="A9M1G4"/>
<dbReference type="KEGG" id="nmn:NMCC_0355"/>
<dbReference type="HOGENOM" id="CLU_018697_2_0_4"/>
<dbReference type="Proteomes" id="UP000001177">
    <property type="component" value="Chromosome"/>
</dbReference>
<dbReference type="GO" id="GO:0005829">
    <property type="term" value="C:cytosol"/>
    <property type="evidence" value="ECO:0007669"/>
    <property type="project" value="TreeGrafter"/>
</dbReference>
<dbReference type="GO" id="GO:0051539">
    <property type="term" value="F:4 iron, 4 sulfur cluster binding"/>
    <property type="evidence" value="ECO:0007669"/>
    <property type="project" value="UniProtKB-UniRule"/>
</dbReference>
<dbReference type="GO" id="GO:0046872">
    <property type="term" value="F:metal ion binding"/>
    <property type="evidence" value="ECO:0007669"/>
    <property type="project" value="UniProtKB-KW"/>
</dbReference>
<dbReference type="GO" id="GO:0035597">
    <property type="term" value="F:N6-isopentenyladenosine methylthiotransferase activity"/>
    <property type="evidence" value="ECO:0007669"/>
    <property type="project" value="TreeGrafter"/>
</dbReference>
<dbReference type="CDD" id="cd01335">
    <property type="entry name" value="Radical_SAM"/>
    <property type="match status" value="1"/>
</dbReference>
<dbReference type="FunFam" id="3.40.50.12160:FF:000001">
    <property type="entry name" value="tRNA-2-methylthio-N(6)-dimethylallyladenosine synthase"/>
    <property type="match status" value="1"/>
</dbReference>
<dbReference type="FunFam" id="3.80.30.20:FF:000001">
    <property type="entry name" value="tRNA-2-methylthio-N(6)-dimethylallyladenosine synthase 2"/>
    <property type="match status" value="1"/>
</dbReference>
<dbReference type="Gene3D" id="3.40.50.12160">
    <property type="entry name" value="Methylthiotransferase, N-terminal domain"/>
    <property type="match status" value="1"/>
</dbReference>
<dbReference type="Gene3D" id="3.80.30.20">
    <property type="entry name" value="tm_1862 like domain"/>
    <property type="match status" value="1"/>
</dbReference>
<dbReference type="HAMAP" id="MF_01864">
    <property type="entry name" value="tRNA_metthiotr_MiaB"/>
    <property type="match status" value="1"/>
</dbReference>
<dbReference type="InterPro" id="IPR006638">
    <property type="entry name" value="Elp3/MiaA/NifB-like_rSAM"/>
</dbReference>
<dbReference type="InterPro" id="IPR005839">
    <property type="entry name" value="Methylthiotransferase"/>
</dbReference>
<dbReference type="InterPro" id="IPR020612">
    <property type="entry name" value="Methylthiotransferase_CS"/>
</dbReference>
<dbReference type="InterPro" id="IPR013848">
    <property type="entry name" value="Methylthiotransferase_N"/>
</dbReference>
<dbReference type="InterPro" id="IPR038135">
    <property type="entry name" value="Methylthiotransferase_N_sf"/>
</dbReference>
<dbReference type="InterPro" id="IPR006463">
    <property type="entry name" value="MiaB_methiolase"/>
</dbReference>
<dbReference type="InterPro" id="IPR007197">
    <property type="entry name" value="rSAM"/>
</dbReference>
<dbReference type="InterPro" id="IPR023404">
    <property type="entry name" value="rSAM_horseshoe"/>
</dbReference>
<dbReference type="InterPro" id="IPR002792">
    <property type="entry name" value="TRAM_dom"/>
</dbReference>
<dbReference type="NCBIfam" id="TIGR01574">
    <property type="entry name" value="miaB-methiolase"/>
    <property type="match status" value="1"/>
</dbReference>
<dbReference type="NCBIfam" id="TIGR00089">
    <property type="entry name" value="MiaB/RimO family radical SAM methylthiotransferase"/>
    <property type="match status" value="1"/>
</dbReference>
<dbReference type="PANTHER" id="PTHR43020">
    <property type="entry name" value="CDK5 REGULATORY SUBUNIT-ASSOCIATED PROTEIN 1"/>
    <property type="match status" value="1"/>
</dbReference>
<dbReference type="PANTHER" id="PTHR43020:SF2">
    <property type="entry name" value="MITOCHONDRIAL TRNA METHYLTHIOTRANSFERASE CDK5RAP1"/>
    <property type="match status" value="1"/>
</dbReference>
<dbReference type="Pfam" id="PF04055">
    <property type="entry name" value="Radical_SAM"/>
    <property type="match status" value="1"/>
</dbReference>
<dbReference type="Pfam" id="PF01938">
    <property type="entry name" value="TRAM"/>
    <property type="match status" value="1"/>
</dbReference>
<dbReference type="Pfam" id="PF00919">
    <property type="entry name" value="UPF0004"/>
    <property type="match status" value="1"/>
</dbReference>
<dbReference type="SFLD" id="SFLDF00273">
    <property type="entry name" value="(dimethylallyl)adenosine_tRNA"/>
    <property type="match status" value="1"/>
</dbReference>
<dbReference type="SFLD" id="SFLDG01082">
    <property type="entry name" value="B12-binding_domain_containing"/>
    <property type="match status" value="1"/>
</dbReference>
<dbReference type="SFLD" id="SFLDS00029">
    <property type="entry name" value="Radical_SAM"/>
    <property type="match status" value="1"/>
</dbReference>
<dbReference type="SMART" id="SM00729">
    <property type="entry name" value="Elp3"/>
    <property type="match status" value="1"/>
</dbReference>
<dbReference type="SUPFAM" id="SSF102114">
    <property type="entry name" value="Radical SAM enzymes"/>
    <property type="match status" value="1"/>
</dbReference>
<dbReference type="PROSITE" id="PS51449">
    <property type="entry name" value="MTTASE_N"/>
    <property type="match status" value="1"/>
</dbReference>
<dbReference type="PROSITE" id="PS01278">
    <property type="entry name" value="MTTASE_RADICAL"/>
    <property type="match status" value="1"/>
</dbReference>
<dbReference type="PROSITE" id="PS51918">
    <property type="entry name" value="RADICAL_SAM"/>
    <property type="match status" value="1"/>
</dbReference>
<dbReference type="PROSITE" id="PS50926">
    <property type="entry name" value="TRAM"/>
    <property type="match status" value="1"/>
</dbReference>
<organism>
    <name type="scientific">Neisseria meningitidis serogroup C (strain 053442)</name>
    <dbReference type="NCBI Taxonomy" id="374833"/>
    <lineage>
        <taxon>Bacteria</taxon>
        <taxon>Pseudomonadati</taxon>
        <taxon>Pseudomonadota</taxon>
        <taxon>Betaproteobacteria</taxon>
        <taxon>Neisseriales</taxon>
        <taxon>Neisseriaceae</taxon>
        <taxon>Neisseria</taxon>
    </lineage>
</organism>
<proteinExistence type="inferred from homology"/>
<sequence length="442" mass="49566">MKKVFIRTFGCQMNEYDSDKMLAVLAEEHGGIEQVTQADEADIILFNTCSVREKAQEKVFSDLGRVRPLKEKNPGLIIGVAGCVASQEGENIIKRAPYVDVVFGPQTLHRLPKMIVDKETSGLSQVDISFPEIEKFDHLPPARVEGGAAFVSIMEGCSKYCSFCVVPYTRGEEFSRPLNDVLTEIANLAQQGVKEINLLGQNVNAYCGEMDDGEICDFATLLRIVHEIPGIERMRFTTSHPREFTDSIIECYRDLPKLVSHLHLPIQSGSDRVLSAMKRGYTALEYKSIIRKLRAIRPDLCLSSDFIVGFPGETEREFEQTLKLVKDIAFDLSFVFIYSPRPGTPAANLHDDTPHEEKVRRLEALNEVIEAETARINQTMIGTVQRCLVEGISKKDPDQLQARTANNRVVNFTGTPNMINQMIDLEITEAYTFSLRGKVVEA</sequence>
<keyword id="KW-0004">4Fe-4S</keyword>
<keyword id="KW-0963">Cytoplasm</keyword>
<keyword id="KW-0408">Iron</keyword>
<keyword id="KW-0411">Iron-sulfur</keyword>
<keyword id="KW-0479">Metal-binding</keyword>
<keyword id="KW-0949">S-adenosyl-L-methionine</keyword>
<keyword id="KW-0808">Transferase</keyword>
<keyword id="KW-0819">tRNA processing</keyword>
<comment type="function">
    <text evidence="1">Catalyzes the methylthiolation of N6-(dimethylallyl)adenosine (i(6)A), leading to the formation of 2-methylthio-N6-(dimethylallyl)adenosine (ms(2)i(6)A) at position 37 in tRNAs that read codons beginning with uridine.</text>
</comment>
<comment type="catalytic activity">
    <reaction evidence="1">
        <text>N(6)-dimethylallyladenosine(37) in tRNA + (sulfur carrier)-SH + AH2 + 2 S-adenosyl-L-methionine = 2-methylsulfanyl-N(6)-dimethylallyladenosine(37) in tRNA + (sulfur carrier)-H + 5'-deoxyadenosine + L-methionine + A + S-adenosyl-L-homocysteine + 2 H(+)</text>
        <dbReference type="Rhea" id="RHEA:37067"/>
        <dbReference type="Rhea" id="RHEA-COMP:10375"/>
        <dbReference type="Rhea" id="RHEA-COMP:10376"/>
        <dbReference type="Rhea" id="RHEA-COMP:14737"/>
        <dbReference type="Rhea" id="RHEA-COMP:14739"/>
        <dbReference type="ChEBI" id="CHEBI:13193"/>
        <dbReference type="ChEBI" id="CHEBI:15378"/>
        <dbReference type="ChEBI" id="CHEBI:17319"/>
        <dbReference type="ChEBI" id="CHEBI:17499"/>
        <dbReference type="ChEBI" id="CHEBI:29917"/>
        <dbReference type="ChEBI" id="CHEBI:57844"/>
        <dbReference type="ChEBI" id="CHEBI:57856"/>
        <dbReference type="ChEBI" id="CHEBI:59789"/>
        <dbReference type="ChEBI" id="CHEBI:64428"/>
        <dbReference type="ChEBI" id="CHEBI:74415"/>
        <dbReference type="ChEBI" id="CHEBI:74417"/>
        <dbReference type="EC" id="2.8.4.3"/>
    </reaction>
</comment>
<comment type="cofactor">
    <cofactor evidence="1">
        <name>[4Fe-4S] cluster</name>
        <dbReference type="ChEBI" id="CHEBI:49883"/>
    </cofactor>
    <text evidence="1">Binds 2 [4Fe-4S] clusters. One cluster is coordinated with 3 cysteines and an exchangeable S-adenosyl-L-methionine.</text>
</comment>
<comment type="subunit">
    <text evidence="1">Monomer.</text>
</comment>
<comment type="subcellular location">
    <subcellularLocation>
        <location evidence="1">Cytoplasm</location>
    </subcellularLocation>
</comment>
<comment type="similarity">
    <text evidence="1">Belongs to the methylthiotransferase family. MiaB subfamily.</text>
</comment>
<reference key="1">
    <citation type="journal article" date="2008" name="Genomics">
        <title>Characterization of ST-4821 complex, a unique Neisseria meningitidis clone.</title>
        <authorList>
            <person name="Peng J."/>
            <person name="Yang L."/>
            <person name="Yang F."/>
            <person name="Yang J."/>
            <person name="Yan Y."/>
            <person name="Nie H."/>
            <person name="Zhang X."/>
            <person name="Xiong Z."/>
            <person name="Jiang Y."/>
            <person name="Cheng F."/>
            <person name="Xu X."/>
            <person name="Chen S."/>
            <person name="Sun L."/>
            <person name="Li W."/>
            <person name="Shen Y."/>
            <person name="Shao Z."/>
            <person name="Liang X."/>
            <person name="Xu J."/>
            <person name="Jin Q."/>
        </authorList>
    </citation>
    <scope>NUCLEOTIDE SEQUENCE [LARGE SCALE GENOMIC DNA]</scope>
    <source>
        <strain>053442</strain>
    </source>
</reference>
<accession>A9M1G4</accession>